<organism>
    <name type="scientific">Brevundimonas diminuta</name>
    <name type="common">Pseudomonas diminuta</name>
    <dbReference type="NCBI Taxonomy" id="293"/>
    <lineage>
        <taxon>Bacteria</taxon>
        <taxon>Pseudomonadati</taxon>
        <taxon>Pseudomonadota</taxon>
        <taxon>Alphaproteobacteria</taxon>
        <taxon>Caulobacterales</taxon>
        <taxon>Caulobacteraceae</taxon>
        <taxon>Brevundimonas</taxon>
    </lineage>
</organism>
<accession>Q9R4P6</accession>
<proteinExistence type="evidence at protein level"/>
<feature type="chain" id="PRO_0000223997" description="Small ribosomal subunit protein bS21">
    <location>
        <begin position="1"/>
        <end position="15" status="greater than"/>
    </location>
</feature>
<feature type="non-terminal residue">
    <location>
        <position position="15"/>
    </location>
</feature>
<keyword id="KW-0903">Direct protein sequencing</keyword>
<keyword id="KW-0687">Ribonucleoprotein</keyword>
<keyword id="KW-0689">Ribosomal protein</keyword>
<sequence>VQIFVXDNNVDQALK</sequence>
<evidence type="ECO:0000305" key="1"/>
<protein>
    <recommendedName>
        <fullName evidence="1">Small ribosomal subunit protein bS21</fullName>
    </recommendedName>
    <alternativeName>
        <fullName>30S ribosomal protein S21</fullName>
    </alternativeName>
</protein>
<comment type="similarity">
    <text evidence="1">Belongs to the bacterial ribosomal protein bS21 family.</text>
</comment>
<dbReference type="GO" id="GO:1990904">
    <property type="term" value="C:ribonucleoprotein complex"/>
    <property type="evidence" value="ECO:0007669"/>
    <property type="project" value="UniProtKB-KW"/>
</dbReference>
<dbReference type="GO" id="GO:0005840">
    <property type="term" value="C:ribosome"/>
    <property type="evidence" value="ECO:0007669"/>
    <property type="project" value="UniProtKB-KW"/>
</dbReference>
<name>RS21_BREDI</name>
<gene>
    <name type="primary">rpsU</name>
</gene>
<reference key="1">
    <citation type="journal article" date="1995" name="Int. J. Syst. Bacteriol.">
        <title>Comparative ribosomal protein sequence analyses of a phylogenetically defined genus, Pseudomonas, and its relatives.</title>
        <authorList>
            <person name="Ochi K."/>
        </authorList>
    </citation>
    <scope>PROTEIN SEQUENCE</scope>
    <source>
        <strain>ATCC 11568 / DSM 7234 / JCM 2788 / NCIB 9393 / NCTC 8545</strain>
    </source>
</reference>